<dbReference type="EC" id="2.7.1.226" evidence="1 2"/>
<dbReference type="EMBL" id="AP006878">
    <property type="protein sequence ID" value="BAD84567.1"/>
    <property type="molecule type" value="Genomic_DNA"/>
</dbReference>
<dbReference type="RefSeq" id="WP_011249333.1">
    <property type="nucleotide sequence ID" value="NC_006624.1"/>
</dbReference>
<dbReference type="PDB" id="5X0B">
    <property type="method" value="X-ray"/>
    <property type="resolution" value="1.75 A"/>
    <property type="chains" value="A=1-242"/>
</dbReference>
<dbReference type="PDB" id="5X0E">
    <property type="method" value="X-ray"/>
    <property type="resolution" value="2.00 A"/>
    <property type="chains" value="A=1-242"/>
</dbReference>
<dbReference type="PDB" id="5X0F">
    <property type="method" value="X-ray"/>
    <property type="resolution" value="1.76 A"/>
    <property type="chains" value="A=1-242"/>
</dbReference>
<dbReference type="PDB" id="5X0G">
    <property type="method" value="X-ray"/>
    <property type="resolution" value="1.90 A"/>
    <property type="chains" value="A=1-242"/>
</dbReference>
<dbReference type="PDB" id="5X0J">
    <property type="method" value="X-ray"/>
    <property type="resolution" value="1.43 A"/>
    <property type="chains" value="A=1-242"/>
</dbReference>
<dbReference type="PDB" id="5X0K">
    <property type="method" value="X-ray"/>
    <property type="resolution" value="1.65 A"/>
    <property type="chains" value="A=1-242"/>
</dbReference>
<dbReference type="PDBsum" id="5X0B"/>
<dbReference type="PDBsum" id="5X0E"/>
<dbReference type="PDBsum" id="5X0F"/>
<dbReference type="PDBsum" id="5X0G"/>
<dbReference type="PDBsum" id="5X0J"/>
<dbReference type="PDBsum" id="5X0K"/>
<dbReference type="SMR" id="Q5JD03"/>
<dbReference type="STRING" id="69014.TK0378"/>
<dbReference type="EnsemblBacteria" id="BAD84567">
    <property type="protein sequence ID" value="BAD84567"/>
    <property type="gene ID" value="TK0378"/>
</dbReference>
<dbReference type="GeneID" id="78446884"/>
<dbReference type="KEGG" id="tko:TK0378"/>
<dbReference type="PATRIC" id="fig|69014.16.peg.375"/>
<dbReference type="eggNOG" id="arCOG01875">
    <property type="taxonomic scope" value="Archaea"/>
</dbReference>
<dbReference type="HOGENOM" id="CLU_1088213_0_0_2"/>
<dbReference type="InParanoid" id="Q5JD03"/>
<dbReference type="OrthoDB" id="89900at2157"/>
<dbReference type="PhylomeDB" id="Q5JD03"/>
<dbReference type="BioCyc" id="MetaCyc:MONOMER-20566"/>
<dbReference type="BRENDA" id="2.7.1.226">
    <property type="organism ID" value="5246"/>
</dbReference>
<dbReference type="UniPathway" id="UPA00136">
    <property type="reaction ID" value="UER00199"/>
</dbReference>
<dbReference type="Proteomes" id="UP000000536">
    <property type="component" value="Chromosome"/>
</dbReference>
<dbReference type="GO" id="GO:0005524">
    <property type="term" value="F:ATP binding"/>
    <property type="evidence" value="ECO:0007669"/>
    <property type="project" value="UniProtKB-KW"/>
</dbReference>
<dbReference type="GO" id="GO:0016301">
    <property type="term" value="F:kinase activity"/>
    <property type="evidence" value="ECO:0007669"/>
    <property type="project" value="UniProtKB-KW"/>
</dbReference>
<dbReference type="GO" id="GO:0046872">
    <property type="term" value="F:metal ion binding"/>
    <property type="evidence" value="ECO:0007669"/>
    <property type="project" value="UniProtKB-KW"/>
</dbReference>
<dbReference type="GO" id="GO:0019344">
    <property type="term" value="P:cysteine biosynthetic process"/>
    <property type="evidence" value="ECO:0007669"/>
    <property type="project" value="UniProtKB-UniPathway"/>
</dbReference>
<dbReference type="CDD" id="cd16400">
    <property type="entry name" value="ParB_Srx_like_nuclease"/>
    <property type="match status" value="1"/>
</dbReference>
<dbReference type="Gene3D" id="3.30.1760.10">
    <property type="entry name" value="Conserved hypothetical protein from pyrococcus furiosus pfu- 392566-001, domain 2"/>
    <property type="match status" value="1"/>
</dbReference>
<dbReference type="Gene3D" id="3.90.1530.10">
    <property type="entry name" value="Conserved hypothetical protein from pyrococcus furiosus pfu- 392566-001, ParB domain"/>
    <property type="match status" value="1"/>
</dbReference>
<dbReference type="InterPro" id="IPR003115">
    <property type="entry name" value="ParB/Sulfiredoxin_dom"/>
</dbReference>
<dbReference type="InterPro" id="IPR036086">
    <property type="entry name" value="ParB/Sulfiredoxin_sf"/>
</dbReference>
<dbReference type="InterPro" id="IPR023098">
    <property type="entry name" value="SerK/SbnI_C"/>
</dbReference>
<dbReference type="InterPro" id="IPR040867">
    <property type="entry name" value="SerK_C"/>
</dbReference>
<dbReference type="Pfam" id="PF02195">
    <property type="entry name" value="ParBc"/>
    <property type="match status" value="1"/>
</dbReference>
<dbReference type="Pfam" id="PF18231">
    <property type="entry name" value="SerK_C"/>
    <property type="match status" value="1"/>
</dbReference>
<dbReference type="SMART" id="SM00470">
    <property type="entry name" value="ParB"/>
    <property type="match status" value="1"/>
</dbReference>
<dbReference type="SUPFAM" id="SSF110849">
    <property type="entry name" value="ParB/Sulfiredoxin"/>
    <property type="match status" value="1"/>
</dbReference>
<name>SERK_THEKO</name>
<sequence>MGVEKVPKYDIPTKKVDYVFIELDKMKPHEQLVQKELEAFIESVTGSGIFWKPMLLAKVPGEDMYLIVDGHHRWAGLQKLGAKRAPSVILDYFSDDVKVYTWYPAFKGDLNEVVERLKKEGLEVIEDPEAEEKAERGEIAFALVGEKSFAIPGGLEEQKKVSKVLDEMSVEGKIELIYYGLKEDAREDMAKGEIDYVFIRKAPTKEEVMELVKRGEVYSPKTTRHVLPFNPDKIDVKLEELF</sequence>
<accession>Q5JD03</accession>
<reference key="1">
    <citation type="journal article" date="2005" name="Genome Res.">
        <title>Complete genome sequence of the hyperthermophilic archaeon Thermococcus kodakaraensis KOD1 and comparison with Pyrococcus genomes.</title>
        <authorList>
            <person name="Fukui T."/>
            <person name="Atomi H."/>
            <person name="Kanai T."/>
            <person name="Matsumi R."/>
            <person name="Fujiwara S."/>
            <person name="Imanaka T."/>
        </authorList>
    </citation>
    <scope>NUCLEOTIDE SEQUENCE [LARGE SCALE GENOMIC DNA]</scope>
    <source>
        <strain>ATCC BAA-918 / JCM 12380 / KOD1</strain>
    </source>
</reference>
<reference key="2">
    <citation type="journal article" date="2016" name="Nat. Commun.">
        <title>An archaeal ADP-dependent serine kinase involved in cysteine biosynthesis and serine metabolism.</title>
        <authorList>
            <person name="Makino Y."/>
            <person name="Sato T."/>
            <person name="Kawamura H."/>
            <person name="Hachisuka S.I."/>
            <person name="Takeno R."/>
            <person name="Imanaka T."/>
            <person name="Atomi H."/>
        </authorList>
    </citation>
    <scope>FUNCTION</scope>
    <scope>CATALYTIC ACTIVITY</scope>
    <scope>BIOPHYSICOCHEMICAL PROPERTIES</scope>
    <scope>PATHWAY</scope>
    <scope>DISRUPTION PHENOTYPE</scope>
    <source>
        <strain>ATCC BAA-918 / JCM 12380 / KOD1</strain>
    </source>
</reference>
<reference evidence="7 8 9 10 11 13" key="3">
    <citation type="journal article" date="2017" name="ACS Chem. Biol.">
        <title>Structural study on the reaction mechanism of a free serine kinase involved in cysteine biosynthesis.</title>
        <authorList>
            <person name="Nagata R."/>
            <person name="Fujihashi M."/>
            <person name="Kawamura H."/>
            <person name="Sato T."/>
            <person name="Fujita T."/>
            <person name="Atomi H."/>
            <person name="Miki K."/>
        </authorList>
    </citation>
    <scope>X-RAY CRYSTALLOGRAPHY (1.43 ANGSTROMS) OF WILD-TYPE AND MUTANTS ALA-30 AND GLN-30 IN COMPLEXES WITH ADP; AMP; PHOSPHOSERINE AND MG(2+)</scope>
    <scope>FUNCTION</scope>
    <scope>CATALYTIC ACTIVITY</scope>
    <scope>MUTAGENESIS OF GLU-4; GLU-30; GLU-36 AND ASP-69</scope>
    <scope>ACTIVE SITE</scope>
</reference>
<feature type="chain" id="PRO_0000447122" description="ADP-dependent L-serine kinase SerK">
    <location>
        <begin position="1"/>
        <end position="242"/>
    </location>
</feature>
<feature type="active site" evidence="5">
    <location>
        <position position="30"/>
    </location>
</feature>
<feature type="binding site" evidence="2 12">
    <location>
        <position position="43"/>
    </location>
    <ligand>
        <name>ADP</name>
        <dbReference type="ChEBI" id="CHEBI:456216"/>
    </ligand>
</feature>
<feature type="binding site" evidence="2 12">
    <location>
        <position position="49"/>
    </location>
    <ligand>
        <name>ADP</name>
        <dbReference type="ChEBI" id="CHEBI:456216"/>
    </ligand>
</feature>
<feature type="binding site" evidence="2 12">
    <location>
        <position position="51"/>
    </location>
    <ligand>
        <name>ADP</name>
        <dbReference type="ChEBI" id="CHEBI:456216"/>
    </ligand>
</feature>
<feature type="binding site" evidence="2 12">
    <location>
        <position position="52"/>
    </location>
    <ligand>
        <name>ADP</name>
        <dbReference type="ChEBI" id="CHEBI:456216"/>
    </ligand>
</feature>
<feature type="binding site" evidence="2 10 13">
    <location>
        <position position="68"/>
    </location>
    <ligand>
        <name>O-phospho-L-serine</name>
        <dbReference type="ChEBI" id="CHEBI:57524"/>
    </ligand>
</feature>
<feature type="binding site" evidence="2 12">
    <location>
        <position position="69"/>
    </location>
    <ligand>
        <name>ADP</name>
        <dbReference type="ChEBI" id="CHEBI:456216"/>
    </ligand>
</feature>
<feature type="binding site" evidence="10 13">
    <location>
        <position position="69"/>
    </location>
    <ligand>
        <name>Mg(2+)</name>
        <dbReference type="ChEBI" id="CHEBI:18420"/>
    </ligand>
</feature>
<feature type="binding site" evidence="2 12">
    <location>
        <position position="70"/>
    </location>
    <ligand>
        <name>ADP</name>
        <dbReference type="ChEBI" id="CHEBI:456216"/>
    </ligand>
</feature>
<feature type="binding site" evidence="2 10 13">
    <location>
        <position position="70"/>
    </location>
    <ligand>
        <name>O-phospho-L-serine</name>
        <dbReference type="ChEBI" id="CHEBI:57524"/>
    </ligand>
</feature>
<feature type="binding site" evidence="2 12">
    <location>
        <position position="71"/>
    </location>
    <ligand>
        <name>ADP</name>
        <dbReference type="ChEBI" id="CHEBI:456216"/>
    </ligand>
</feature>
<feature type="binding site" evidence="2 10 13">
    <location>
        <position position="71"/>
    </location>
    <ligand>
        <name>O-phospho-L-serine</name>
        <dbReference type="ChEBI" id="CHEBI:57524"/>
    </ligand>
</feature>
<feature type="binding site" evidence="2 12">
    <location>
        <position position="72"/>
    </location>
    <ligand>
        <name>ADP</name>
        <dbReference type="ChEBI" id="CHEBI:456216"/>
    </ligand>
</feature>
<feature type="binding site" evidence="2 10 13">
    <location>
        <position position="72"/>
    </location>
    <ligand>
        <name>O-phospho-L-serine</name>
        <dbReference type="ChEBI" id="CHEBI:57524"/>
    </ligand>
</feature>
<feature type="binding site" evidence="2 12">
    <location>
        <position position="73"/>
    </location>
    <ligand>
        <name>ADP</name>
        <dbReference type="ChEBI" id="CHEBI:456216"/>
    </ligand>
</feature>
<feature type="binding site" evidence="2 10 13">
    <location>
        <position position="102"/>
    </location>
    <ligand>
        <name>O-phospho-L-serine</name>
        <dbReference type="ChEBI" id="CHEBI:57524"/>
    </ligand>
</feature>
<feature type="binding site" evidence="2 10 13">
    <location>
        <position position="221"/>
    </location>
    <ligand>
        <name>O-phospho-L-serine</name>
        <dbReference type="ChEBI" id="CHEBI:57524"/>
    </ligand>
</feature>
<feature type="binding site" evidence="2 10 13">
    <location>
        <position position="223"/>
    </location>
    <ligand>
        <name>O-phospho-L-serine</name>
        <dbReference type="ChEBI" id="CHEBI:57524"/>
    </ligand>
</feature>
<feature type="binding site" evidence="2 10 13">
    <location>
        <position position="225"/>
    </location>
    <ligand>
        <name>O-phospho-L-serine</name>
        <dbReference type="ChEBI" id="CHEBI:57524"/>
    </ligand>
</feature>
<feature type="mutagenesis site" description="Strong decrease in activity." evidence="2">
    <original>E</original>
    <variation>A</variation>
    <location>
        <position position="4"/>
    </location>
</feature>
<feature type="mutagenesis site" description="Loss of activity." evidence="2">
    <original>E</original>
    <variation>A</variation>
    <location>
        <position position="30"/>
    </location>
</feature>
<feature type="mutagenesis site" description="Decrease in activity." evidence="2">
    <original>E</original>
    <variation>A</variation>
    <location>
        <position position="36"/>
    </location>
</feature>
<feature type="mutagenesis site" description="Loss of activity." evidence="2">
    <original>D</original>
    <variation>A</variation>
    <location>
        <position position="69"/>
    </location>
</feature>
<feature type="strand" evidence="14">
    <location>
        <begin position="3"/>
        <end position="5"/>
    </location>
</feature>
<feature type="strand" evidence="15">
    <location>
        <begin position="19"/>
        <end position="22"/>
    </location>
</feature>
<feature type="helix" evidence="15">
    <location>
        <begin position="23"/>
        <end position="25"/>
    </location>
</feature>
<feature type="helix" evidence="15">
    <location>
        <begin position="34"/>
        <end position="47"/>
    </location>
</feature>
<feature type="strand" evidence="15">
    <location>
        <begin position="54"/>
        <end position="58"/>
    </location>
</feature>
<feature type="strand" evidence="15">
    <location>
        <begin position="65"/>
        <end position="69"/>
    </location>
</feature>
<feature type="helix" evidence="15">
    <location>
        <begin position="71"/>
        <end position="80"/>
    </location>
</feature>
<feature type="strand" evidence="15">
    <location>
        <begin position="84"/>
        <end position="90"/>
    </location>
</feature>
<feature type="strand" evidence="15">
    <location>
        <begin position="98"/>
        <end position="100"/>
    </location>
</feature>
<feature type="strand" evidence="15">
    <location>
        <begin position="103"/>
        <end position="108"/>
    </location>
</feature>
<feature type="helix" evidence="15">
    <location>
        <begin position="110"/>
        <end position="119"/>
    </location>
</feature>
<feature type="helix" evidence="15">
    <location>
        <begin position="130"/>
        <end position="135"/>
    </location>
</feature>
<feature type="strand" evidence="15">
    <location>
        <begin position="138"/>
        <end position="151"/>
    </location>
</feature>
<feature type="helix" evidence="15">
    <location>
        <begin position="155"/>
        <end position="170"/>
    </location>
</feature>
<feature type="strand" evidence="15">
    <location>
        <begin position="173"/>
        <end position="180"/>
    </location>
</feature>
<feature type="helix" evidence="15">
    <location>
        <begin position="182"/>
        <end position="190"/>
    </location>
</feature>
<feature type="strand" evidence="15">
    <location>
        <begin position="195"/>
        <end position="199"/>
    </location>
</feature>
<feature type="helix" evidence="15">
    <location>
        <begin position="205"/>
        <end position="213"/>
    </location>
</feature>
<feature type="strand" evidence="15">
    <location>
        <begin position="224"/>
        <end position="226"/>
    </location>
</feature>
<feature type="strand" evidence="15">
    <location>
        <begin position="228"/>
        <end position="231"/>
    </location>
</feature>
<feature type="helix" evidence="15">
    <location>
        <begin position="238"/>
        <end position="241"/>
    </location>
</feature>
<gene>
    <name evidence="3" type="primary">serK</name>
    <name evidence="6" type="ordered locus">TK0378</name>
</gene>
<keyword id="KW-0002">3D-structure</keyword>
<keyword id="KW-0067">ATP-binding</keyword>
<keyword id="KW-0418">Kinase</keyword>
<keyword id="KW-0460">Magnesium</keyword>
<keyword id="KW-0479">Metal-binding</keyword>
<keyword id="KW-0547">Nucleotide-binding</keyword>
<keyword id="KW-1185">Reference proteome</keyword>
<keyword id="KW-0808">Transferase</keyword>
<comment type="function">
    <text evidence="1 2">Free serine kinase that uses ADP to phosphorylate L-serine to yield O-phospho-L-serine and AMP.</text>
</comment>
<comment type="catalytic activity">
    <reaction evidence="1 2">
        <text>L-serine + ADP = O-phospho-L-serine + AMP + H(+)</text>
        <dbReference type="Rhea" id="RHEA:59176"/>
        <dbReference type="ChEBI" id="CHEBI:15378"/>
        <dbReference type="ChEBI" id="CHEBI:33384"/>
        <dbReference type="ChEBI" id="CHEBI:57524"/>
        <dbReference type="ChEBI" id="CHEBI:456215"/>
        <dbReference type="ChEBI" id="CHEBI:456216"/>
        <dbReference type="EC" id="2.7.1.226"/>
    </reaction>
</comment>
<comment type="cofactor">
    <cofactor evidence="5">
        <name>Mg(2+)</name>
        <dbReference type="ChEBI" id="CHEBI:18420"/>
    </cofactor>
</comment>
<comment type="biophysicochemical properties">
    <kinetics>
        <KM evidence="1">5.1 mM for serine</KM>
        <KM evidence="1">2.4 mM for ADP</KM>
        <text evidence="1">kcat is 218 sec(-1) with serine as substrate. kcat is 204 sec(-1) with ADP as substrate.</text>
    </kinetics>
</comment>
<comment type="pathway">
    <text evidence="1">Amino-acid biosynthesis; L-cysteine biosynthesis; L-cysteine from L-serine: step 1/2.</text>
</comment>
<comment type="disruption phenotype">
    <text evidence="1">Disruption of gene does not lead to complete Cys auxotrophy, but mutant displays a growth defect in an amino acid medium depleted of Cys.</text>
</comment>
<comment type="similarity">
    <text evidence="4">Belongs to the SerK family.</text>
</comment>
<protein>
    <recommendedName>
        <fullName evidence="4">ADP-dependent L-serine kinase SerK</fullName>
        <ecNumber evidence="1 2">2.7.1.226</ecNumber>
    </recommendedName>
</protein>
<organism>
    <name type="scientific">Thermococcus kodakarensis (strain ATCC BAA-918 / JCM 12380 / KOD1)</name>
    <name type="common">Pyrococcus kodakaraensis (strain KOD1)</name>
    <dbReference type="NCBI Taxonomy" id="69014"/>
    <lineage>
        <taxon>Archaea</taxon>
        <taxon>Methanobacteriati</taxon>
        <taxon>Methanobacteriota</taxon>
        <taxon>Thermococci</taxon>
        <taxon>Thermococcales</taxon>
        <taxon>Thermococcaceae</taxon>
        <taxon>Thermococcus</taxon>
    </lineage>
</organism>
<proteinExistence type="evidence at protein level"/>
<evidence type="ECO:0000269" key="1">
    <source>
    </source>
</evidence>
<evidence type="ECO:0000269" key="2">
    <source>
    </source>
</evidence>
<evidence type="ECO:0000303" key="3">
    <source>
    </source>
</evidence>
<evidence type="ECO:0000305" key="4"/>
<evidence type="ECO:0000305" key="5">
    <source>
    </source>
</evidence>
<evidence type="ECO:0000312" key="6">
    <source>
        <dbReference type="EMBL" id="BAD84567.1"/>
    </source>
</evidence>
<evidence type="ECO:0000312" key="7">
    <source>
        <dbReference type="PDB" id="5X0G"/>
    </source>
</evidence>
<evidence type="ECO:0000312" key="8">
    <source>
        <dbReference type="PDB" id="5X0K"/>
    </source>
</evidence>
<evidence type="ECO:0007744" key="9">
    <source>
        <dbReference type="PDB" id="5X0B"/>
    </source>
</evidence>
<evidence type="ECO:0007744" key="10">
    <source>
        <dbReference type="PDB" id="5X0E"/>
    </source>
</evidence>
<evidence type="ECO:0007744" key="11">
    <source>
        <dbReference type="PDB" id="5X0F"/>
    </source>
</evidence>
<evidence type="ECO:0007744" key="12">
    <source>
        <dbReference type="PDB" id="5X0G"/>
    </source>
</evidence>
<evidence type="ECO:0007744" key="13">
    <source>
        <dbReference type="PDB" id="5X0J"/>
    </source>
</evidence>
<evidence type="ECO:0007829" key="14">
    <source>
        <dbReference type="PDB" id="5X0B"/>
    </source>
</evidence>
<evidence type="ECO:0007829" key="15">
    <source>
        <dbReference type="PDB" id="5X0J"/>
    </source>
</evidence>